<protein>
    <recommendedName>
        <fullName evidence="1">Small ribosomal subunit protein bS6</fullName>
    </recommendedName>
    <alternativeName>
        <fullName evidence="2">30S ribosomal protein S6</fullName>
    </alternativeName>
</protein>
<reference key="1">
    <citation type="journal article" date="2006" name="DNA Res.">
        <title>Genome sequence of the cat pathogen, Chlamydophila felis.</title>
        <authorList>
            <person name="Azuma Y."/>
            <person name="Hirakawa H."/>
            <person name="Yamashita A."/>
            <person name="Cai Y."/>
            <person name="Rahman M.A."/>
            <person name="Suzuki H."/>
            <person name="Mitaku S."/>
            <person name="Toh H."/>
            <person name="Goto S."/>
            <person name="Murakami T."/>
            <person name="Sugi K."/>
            <person name="Hayashi H."/>
            <person name="Fukushi H."/>
            <person name="Hattori M."/>
            <person name="Kuhara S."/>
            <person name="Shirai M."/>
        </authorList>
    </citation>
    <scope>NUCLEOTIDE SEQUENCE [LARGE SCALE GENOMIC DNA]</scope>
    <source>
        <strain>Fe/C-56</strain>
    </source>
</reference>
<accession>Q255S0</accession>
<proteinExistence type="inferred from homology"/>
<dbReference type="EMBL" id="AP006861">
    <property type="protein sequence ID" value="BAE80968.1"/>
    <property type="molecule type" value="Genomic_DNA"/>
</dbReference>
<dbReference type="RefSeq" id="WP_011457751.1">
    <property type="nucleotide sequence ID" value="NC_007899.1"/>
</dbReference>
<dbReference type="SMR" id="Q255S0"/>
<dbReference type="STRING" id="264202.CF0196"/>
<dbReference type="KEGG" id="cfe:CF0196"/>
<dbReference type="eggNOG" id="COG0360">
    <property type="taxonomic scope" value="Bacteria"/>
</dbReference>
<dbReference type="HOGENOM" id="CLU_113441_5_2_0"/>
<dbReference type="OrthoDB" id="9812702at2"/>
<dbReference type="Proteomes" id="UP000001260">
    <property type="component" value="Chromosome"/>
</dbReference>
<dbReference type="GO" id="GO:0005737">
    <property type="term" value="C:cytoplasm"/>
    <property type="evidence" value="ECO:0007669"/>
    <property type="project" value="UniProtKB-ARBA"/>
</dbReference>
<dbReference type="GO" id="GO:1990904">
    <property type="term" value="C:ribonucleoprotein complex"/>
    <property type="evidence" value="ECO:0007669"/>
    <property type="project" value="UniProtKB-KW"/>
</dbReference>
<dbReference type="GO" id="GO:0005840">
    <property type="term" value="C:ribosome"/>
    <property type="evidence" value="ECO:0007669"/>
    <property type="project" value="UniProtKB-KW"/>
</dbReference>
<dbReference type="GO" id="GO:0070181">
    <property type="term" value="F:small ribosomal subunit rRNA binding"/>
    <property type="evidence" value="ECO:0007669"/>
    <property type="project" value="TreeGrafter"/>
</dbReference>
<dbReference type="GO" id="GO:0003735">
    <property type="term" value="F:structural constituent of ribosome"/>
    <property type="evidence" value="ECO:0007669"/>
    <property type="project" value="InterPro"/>
</dbReference>
<dbReference type="GO" id="GO:0006412">
    <property type="term" value="P:translation"/>
    <property type="evidence" value="ECO:0007669"/>
    <property type="project" value="UniProtKB-UniRule"/>
</dbReference>
<dbReference type="CDD" id="cd00473">
    <property type="entry name" value="bS6"/>
    <property type="match status" value="1"/>
</dbReference>
<dbReference type="Gene3D" id="3.30.70.60">
    <property type="match status" value="1"/>
</dbReference>
<dbReference type="HAMAP" id="MF_00360">
    <property type="entry name" value="Ribosomal_bS6"/>
    <property type="match status" value="1"/>
</dbReference>
<dbReference type="InterPro" id="IPR000529">
    <property type="entry name" value="Ribosomal_bS6"/>
</dbReference>
<dbReference type="InterPro" id="IPR035980">
    <property type="entry name" value="Ribosomal_bS6_sf"/>
</dbReference>
<dbReference type="InterPro" id="IPR020814">
    <property type="entry name" value="Ribosomal_S6_plastid/chlpt"/>
</dbReference>
<dbReference type="InterPro" id="IPR014717">
    <property type="entry name" value="Transl_elong_EF1B/ribsomal_bS6"/>
</dbReference>
<dbReference type="NCBIfam" id="TIGR00166">
    <property type="entry name" value="S6"/>
    <property type="match status" value="1"/>
</dbReference>
<dbReference type="PANTHER" id="PTHR21011">
    <property type="entry name" value="MITOCHONDRIAL 28S RIBOSOMAL PROTEIN S6"/>
    <property type="match status" value="1"/>
</dbReference>
<dbReference type="PANTHER" id="PTHR21011:SF1">
    <property type="entry name" value="SMALL RIBOSOMAL SUBUNIT PROTEIN BS6M"/>
    <property type="match status" value="1"/>
</dbReference>
<dbReference type="Pfam" id="PF01250">
    <property type="entry name" value="Ribosomal_S6"/>
    <property type="match status" value="1"/>
</dbReference>
<dbReference type="SUPFAM" id="SSF54995">
    <property type="entry name" value="Ribosomal protein S6"/>
    <property type="match status" value="1"/>
</dbReference>
<sequence>MKEKTTQLYEGAYVFSVTLSEEARRKALEKVTSGIINYGGEILKIHDQGRKKLAYTIRGAREGYYYLIYFSVVPGVIAELWKEYHLNEDLLRFLTLKTDAVKEVLEFASLPE</sequence>
<name>RS6_CHLFF</name>
<feature type="chain" id="PRO_1000005243" description="Small ribosomal subunit protein bS6">
    <location>
        <begin position="1"/>
        <end position="112"/>
    </location>
</feature>
<organism>
    <name type="scientific">Chlamydia felis (strain Fe/C-56)</name>
    <name type="common">Chlamydophila felis</name>
    <dbReference type="NCBI Taxonomy" id="264202"/>
    <lineage>
        <taxon>Bacteria</taxon>
        <taxon>Pseudomonadati</taxon>
        <taxon>Chlamydiota</taxon>
        <taxon>Chlamydiia</taxon>
        <taxon>Chlamydiales</taxon>
        <taxon>Chlamydiaceae</taxon>
        <taxon>Chlamydia/Chlamydophila group</taxon>
        <taxon>Chlamydia</taxon>
    </lineage>
</organism>
<keyword id="KW-0687">Ribonucleoprotein</keyword>
<keyword id="KW-0689">Ribosomal protein</keyword>
<keyword id="KW-0694">RNA-binding</keyword>
<keyword id="KW-0699">rRNA-binding</keyword>
<comment type="function">
    <text evidence="1">Binds together with bS18 to 16S ribosomal RNA.</text>
</comment>
<comment type="similarity">
    <text evidence="1">Belongs to the bacterial ribosomal protein bS6 family.</text>
</comment>
<gene>
    <name evidence="1" type="primary">rpsF</name>
    <name type="ordered locus">CF0196</name>
</gene>
<evidence type="ECO:0000255" key="1">
    <source>
        <dbReference type="HAMAP-Rule" id="MF_00360"/>
    </source>
</evidence>
<evidence type="ECO:0000305" key="2"/>